<protein>
    <recommendedName>
        <fullName evidence="1">Large ribosomal subunit protein bL28</fullName>
    </recommendedName>
    <alternativeName>
        <fullName evidence="3">50S ribosomal protein L28</fullName>
    </alternativeName>
</protein>
<gene>
    <name evidence="1" type="primary">rpmB</name>
    <name type="ordered locus">Sca_0845</name>
</gene>
<comment type="similarity">
    <text evidence="1">Belongs to the bacterial ribosomal protein bL28 family.</text>
</comment>
<feature type="chain" id="PRO_1000195939" description="Large ribosomal subunit protein bL28">
    <location>
        <begin position="1"/>
        <end position="62"/>
    </location>
</feature>
<feature type="region of interest" description="Disordered" evidence="2">
    <location>
        <begin position="1"/>
        <end position="23"/>
    </location>
</feature>
<name>RL28_STACT</name>
<proteinExistence type="inferred from homology"/>
<keyword id="KW-1185">Reference proteome</keyword>
<keyword id="KW-0687">Ribonucleoprotein</keyword>
<keyword id="KW-0689">Ribosomal protein</keyword>
<organism>
    <name type="scientific">Staphylococcus carnosus (strain TM300)</name>
    <dbReference type="NCBI Taxonomy" id="396513"/>
    <lineage>
        <taxon>Bacteria</taxon>
        <taxon>Bacillati</taxon>
        <taxon>Bacillota</taxon>
        <taxon>Bacilli</taxon>
        <taxon>Bacillales</taxon>
        <taxon>Staphylococcaceae</taxon>
        <taxon>Staphylococcus</taxon>
    </lineage>
</organism>
<dbReference type="EMBL" id="AM295250">
    <property type="protein sequence ID" value="CAL27755.1"/>
    <property type="molecule type" value="Genomic_DNA"/>
</dbReference>
<dbReference type="RefSeq" id="WP_015900097.1">
    <property type="nucleotide sequence ID" value="NC_012121.1"/>
</dbReference>
<dbReference type="SMR" id="B9DPK8"/>
<dbReference type="GeneID" id="93793278"/>
<dbReference type="KEGG" id="sca:SCA_0845"/>
<dbReference type="eggNOG" id="COG0227">
    <property type="taxonomic scope" value="Bacteria"/>
</dbReference>
<dbReference type="HOGENOM" id="CLU_064548_7_1_9"/>
<dbReference type="OrthoDB" id="9805609at2"/>
<dbReference type="BioCyc" id="SCAR396513:SCA_RS04275-MONOMER"/>
<dbReference type="Proteomes" id="UP000000444">
    <property type="component" value="Chromosome"/>
</dbReference>
<dbReference type="GO" id="GO:1990904">
    <property type="term" value="C:ribonucleoprotein complex"/>
    <property type="evidence" value="ECO:0007669"/>
    <property type="project" value="UniProtKB-KW"/>
</dbReference>
<dbReference type="GO" id="GO:0005840">
    <property type="term" value="C:ribosome"/>
    <property type="evidence" value="ECO:0007669"/>
    <property type="project" value="UniProtKB-KW"/>
</dbReference>
<dbReference type="GO" id="GO:0003735">
    <property type="term" value="F:structural constituent of ribosome"/>
    <property type="evidence" value="ECO:0007669"/>
    <property type="project" value="InterPro"/>
</dbReference>
<dbReference type="GO" id="GO:0006412">
    <property type="term" value="P:translation"/>
    <property type="evidence" value="ECO:0007669"/>
    <property type="project" value="UniProtKB-UniRule"/>
</dbReference>
<dbReference type="Gene3D" id="2.30.170.40">
    <property type="entry name" value="Ribosomal protein L28/L24"/>
    <property type="match status" value="1"/>
</dbReference>
<dbReference type="HAMAP" id="MF_00373">
    <property type="entry name" value="Ribosomal_bL28"/>
    <property type="match status" value="1"/>
</dbReference>
<dbReference type="InterPro" id="IPR050096">
    <property type="entry name" value="Bacterial_rp_bL28"/>
</dbReference>
<dbReference type="InterPro" id="IPR026569">
    <property type="entry name" value="Ribosomal_bL28"/>
</dbReference>
<dbReference type="InterPro" id="IPR034704">
    <property type="entry name" value="Ribosomal_bL28/bL31-like_sf"/>
</dbReference>
<dbReference type="InterPro" id="IPR001383">
    <property type="entry name" value="Ribosomal_bL28_bact-type"/>
</dbReference>
<dbReference type="InterPro" id="IPR037147">
    <property type="entry name" value="Ribosomal_bL28_sf"/>
</dbReference>
<dbReference type="NCBIfam" id="TIGR00009">
    <property type="entry name" value="L28"/>
    <property type="match status" value="1"/>
</dbReference>
<dbReference type="PANTHER" id="PTHR39080">
    <property type="entry name" value="50S RIBOSOMAL PROTEIN L28"/>
    <property type="match status" value="1"/>
</dbReference>
<dbReference type="PANTHER" id="PTHR39080:SF1">
    <property type="entry name" value="LARGE RIBOSOMAL SUBUNIT PROTEIN BL28A"/>
    <property type="match status" value="1"/>
</dbReference>
<dbReference type="Pfam" id="PF00830">
    <property type="entry name" value="Ribosomal_L28"/>
    <property type="match status" value="1"/>
</dbReference>
<dbReference type="SUPFAM" id="SSF143800">
    <property type="entry name" value="L28p-like"/>
    <property type="match status" value="1"/>
</dbReference>
<accession>B9DPK8</accession>
<sequence length="62" mass="6993">MGKQCYVTGRKASTGNRRSHALNSTKRRWNANLQKVRILVDGKPKKVWVSARALKSGKVTRV</sequence>
<evidence type="ECO:0000255" key="1">
    <source>
        <dbReference type="HAMAP-Rule" id="MF_00373"/>
    </source>
</evidence>
<evidence type="ECO:0000256" key="2">
    <source>
        <dbReference type="SAM" id="MobiDB-lite"/>
    </source>
</evidence>
<evidence type="ECO:0000305" key="3"/>
<reference key="1">
    <citation type="journal article" date="2009" name="Appl. Environ. Microbiol.">
        <title>Genome analysis of the meat starter culture bacterium Staphylococcus carnosus TM300.</title>
        <authorList>
            <person name="Rosenstein R."/>
            <person name="Nerz C."/>
            <person name="Biswas L."/>
            <person name="Resch A."/>
            <person name="Raddatz G."/>
            <person name="Schuster S.C."/>
            <person name="Goetz F."/>
        </authorList>
    </citation>
    <scope>NUCLEOTIDE SEQUENCE [LARGE SCALE GENOMIC DNA]</scope>
    <source>
        <strain>TM300</strain>
    </source>
</reference>